<dbReference type="EC" id="3.1.-.-" evidence="1"/>
<dbReference type="EMBL" id="BX640411">
    <property type="protein sequence ID" value="CAE40697.1"/>
    <property type="molecule type" value="Genomic_DNA"/>
</dbReference>
<dbReference type="RefSeq" id="NP_879195.1">
    <property type="nucleotide sequence ID" value="NC_002929.2"/>
</dbReference>
<dbReference type="SMR" id="Q7W045"/>
<dbReference type="STRING" id="257313.BP0320"/>
<dbReference type="PaxDb" id="257313-BP0320"/>
<dbReference type="KEGG" id="bpe:BP0320"/>
<dbReference type="PATRIC" id="fig|257313.5.peg.346"/>
<dbReference type="eggNOG" id="COG0816">
    <property type="taxonomic scope" value="Bacteria"/>
</dbReference>
<dbReference type="HOGENOM" id="CLU_098240_3_2_4"/>
<dbReference type="Proteomes" id="UP000002676">
    <property type="component" value="Chromosome"/>
</dbReference>
<dbReference type="GO" id="GO:0005829">
    <property type="term" value="C:cytosol"/>
    <property type="evidence" value="ECO:0007669"/>
    <property type="project" value="TreeGrafter"/>
</dbReference>
<dbReference type="GO" id="GO:0004518">
    <property type="term" value="F:nuclease activity"/>
    <property type="evidence" value="ECO:0007669"/>
    <property type="project" value="UniProtKB-KW"/>
</dbReference>
<dbReference type="GO" id="GO:0000967">
    <property type="term" value="P:rRNA 5'-end processing"/>
    <property type="evidence" value="ECO:0007669"/>
    <property type="project" value="UniProtKB-UniRule"/>
</dbReference>
<dbReference type="CDD" id="cd16964">
    <property type="entry name" value="YqgF"/>
    <property type="match status" value="1"/>
</dbReference>
<dbReference type="Gene3D" id="3.30.420.140">
    <property type="entry name" value="YqgF/RNase H-like domain"/>
    <property type="match status" value="1"/>
</dbReference>
<dbReference type="HAMAP" id="MF_00651">
    <property type="entry name" value="Nuclease_YqgF"/>
    <property type="match status" value="1"/>
</dbReference>
<dbReference type="InterPro" id="IPR012337">
    <property type="entry name" value="RNaseH-like_sf"/>
</dbReference>
<dbReference type="InterPro" id="IPR005227">
    <property type="entry name" value="YqgF"/>
</dbReference>
<dbReference type="InterPro" id="IPR006641">
    <property type="entry name" value="YqgF/RNaseH-like_dom"/>
</dbReference>
<dbReference type="InterPro" id="IPR037027">
    <property type="entry name" value="YqgF/RNaseH-like_dom_sf"/>
</dbReference>
<dbReference type="NCBIfam" id="TIGR00250">
    <property type="entry name" value="RNAse_H_YqgF"/>
    <property type="match status" value="1"/>
</dbReference>
<dbReference type="PANTHER" id="PTHR33317">
    <property type="entry name" value="POLYNUCLEOTIDYL TRANSFERASE, RIBONUCLEASE H-LIKE SUPERFAMILY PROTEIN"/>
    <property type="match status" value="1"/>
</dbReference>
<dbReference type="PANTHER" id="PTHR33317:SF4">
    <property type="entry name" value="POLYNUCLEOTIDYL TRANSFERASE, RIBONUCLEASE H-LIKE SUPERFAMILY PROTEIN"/>
    <property type="match status" value="1"/>
</dbReference>
<dbReference type="Pfam" id="PF03652">
    <property type="entry name" value="RuvX"/>
    <property type="match status" value="1"/>
</dbReference>
<dbReference type="SMART" id="SM00732">
    <property type="entry name" value="YqgFc"/>
    <property type="match status" value="1"/>
</dbReference>
<dbReference type="SUPFAM" id="SSF53098">
    <property type="entry name" value="Ribonuclease H-like"/>
    <property type="match status" value="1"/>
</dbReference>
<proteinExistence type="inferred from homology"/>
<feature type="chain" id="PRO_0000172030" description="Putative pre-16S rRNA nuclease">
    <location>
        <begin position="1"/>
        <end position="133"/>
    </location>
</feature>
<gene>
    <name type="ordered locus">BP0320</name>
</gene>
<reference key="1">
    <citation type="journal article" date="2003" name="Nat. Genet.">
        <title>Comparative analysis of the genome sequences of Bordetella pertussis, Bordetella parapertussis and Bordetella bronchiseptica.</title>
        <authorList>
            <person name="Parkhill J."/>
            <person name="Sebaihia M."/>
            <person name="Preston A."/>
            <person name="Murphy L.D."/>
            <person name="Thomson N.R."/>
            <person name="Harris D.E."/>
            <person name="Holden M.T.G."/>
            <person name="Churcher C.M."/>
            <person name="Bentley S.D."/>
            <person name="Mungall K.L."/>
            <person name="Cerdeno-Tarraga A.-M."/>
            <person name="Temple L."/>
            <person name="James K.D."/>
            <person name="Harris B."/>
            <person name="Quail M.A."/>
            <person name="Achtman M."/>
            <person name="Atkin R."/>
            <person name="Baker S."/>
            <person name="Basham D."/>
            <person name="Bason N."/>
            <person name="Cherevach I."/>
            <person name="Chillingworth T."/>
            <person name="Collins M."/>
            <person name="Cronin A."/>
            <person name="Davis P."/>
            <person name="Doggett J."/>
            <person name="Feltwell T."/>
            <person name="Goble A."/>
            <person name="Hamlin N."/>
            <person name="Hauser H."/>
            <person name="Holroyd S."/>
            <person name="Jagels K."/>
            <person name="Leather S."/>
            <person name="Moule S."/>
            <person name="Norberczak H."/>
            <person name="O'Neil S."/>
            <person name="Ormond D."/>
            <person name="Price C."/>
            <person name="Rabbinowitsch E."/>
            <person name="Rutter S."/>
            <person name="Sanders M."/>
            <person name="Saunders D."/>
            <person name="Seeger K."/>
            <person name="Sharp S."/>
            <person name="Simmonds M."/>
            <person name="Skelton J."/>
            <person name="Squares R."/>
            <person name="Squares S."/>
            <person name="Stevens K."/>
            <person name="Unwin L."/>
            <person name="Whitehead S."/>
            <person name="Barrell B.G."/>
            <person name="Maskell D.J."/>
        </authorList>
    </citation>
    <scope>NUCLEOTIDE SEQUENCE [LARGE SCALE GENOMIC DNA]</scope>
    <source>
        <strain>Tohama I / ATCC BAA-589 / NCTC 13251</strain>
    </source>
</reference>
<sequence>MPEETLLAFDFGEKKIGIAIGNTLTRQARPLEIIFSETRAARFGRIGQLLQEWQPQRAVVGLPLTLDGQEQPASARARRFANQLHGHFGLAVELVDERSSSMEAQQLLGTHADDDAVAAAVILQRYLDTLSQP</sequence>
<name>YQGF_BORPE</name>
<comment type="function">
    <text evidence="1">Could be a nuclease involved in processing of the 5'-end of pre-16S rRNA.</text>
</comment>
<comment type="subcellular location">
    <subcellularLocation>
        <location evidence="1">Cytoplasm</location>
    </subcellularLocation>
</comment>
<comment type="similarity">
    <text evidence="1">Belongs to the YqgF nuclease family.</text>
</comment>
<protein>
    <recommendedName>
        <fullName evidence="1">Putative pre-16S rRNA nuclease</fullName>
        <ecNumber evidence="1">3.1.-.-</ecNumber>
    </recommendedName>
</protein>
<evidence type="ECO:0000255" key="1">
    <source>
        <dbReference type="HAMAP-Rule" id="MF_00651"/>
    </source>
</evidence>
<accession>Q7W045</accession>
<organism>
    <name type="scientific">Bordetella pertussis (strain Tohama I / ATCC BAA-589 / NCTC 13251)</name>
    <dbReference type="NCBI Taxonomy" id="257313"/>
    <lineage>
        <taxon>Bacteria</taxon>
        <taxon>Pseudomonadati</taxon>
        <taxon>Pseudomonadota</taxon>
        <taxon>Betaproteobacteria</taxon>
        <taxon>Burkholderiales</taxon>
        <taxon>Alcaligenaceae</taxon>
        <taxon>Bordetella</taxon>
    </lineage>
</organism>
<keyword id="KW-0963">Cytoplasm</keyword>
<keyword id="KW-0378">Hydrolase</keyword>
<keyword id="KW-0540">Nuclease</keyword>
<keyword id="KW-1185">Reference proteome</keyword>
<keyword id="KW-0690">Ribosome biogenesis</keyword>